<reference key="1">
    <citation type="journal article" date="2004" name="Mol. Biol. Evol.">
        <title>Rhesus macaque class I duplicon structures, organization, and evolution within the alpha block of the major histocompatibility complex.</title>
        <authorList>
            <person name="Kulski J.K."/>
            <person name="Anzai T."/>
            <person name="Shiina T."/>
            <person name="Inoko H."/>
        </authorList>
    </citation>
    <scope>NUCLEOTIDE SEQUENCE [LARGE SCALE GENOMIC DNA]</scope>
</reference>
<reference key="2">
    <citation type="journal article" date="2008" name="Cell Stem Cell">
        <title>Generation of induced pluripotent stem cells from adult rhesus monkey fibroblasts.</title>
        <authorList>
            <person name="Liu H."/>
            <person name="Zhu F."/>
            <person name="Yong J."/>
            <person name="Zhang P."/>
            <person name="Hou P."/>
            <person name="Li H."/>
            <person name="Jiang W."/>
            <person name="Cai J."/>
            <person name="Liu M."/>
            <person name="Cui K."/>
            <person name="Qu X."/>
            <person name="Xiang T."/>
            <person name="Lu D."/>
            <person name="Chi X."/>
            <person name="Gao G."/>
            <person name="Ji W."/>
            <person name="Ding M."/>
            <person name="Deng H."/>
        </authorList>
    </citation>
    <scope>BIOTECHNOLOGY</scope>
    <scope>FUNCTION</scope>
</reference>
<proteinExistence type="evidence at protein level"/>
<dbReference type="EMBL" id="AB128049">
    <property type="protein sequence ID" value="BAD69745.1"/>
    <property type="molecule type" value="Genomic_DNA"/>
</dbReference>
<dbReference type="RefSeq" id="NP_001108427.1">
    <property type="nucleotide sequence ID" value="NM_001114955.1"/>
</dbReference>
<dbReference type="SMR" id="Q5TM49"/>
<dbReference type="FunCoup" id="Q5TM49">
    <property type="interactions" value="923"/>
</dbReference>
<dbReference type="STRING" id="9544.ENSMMUP00000020597"/>
<dbReference type="PaxDb" id="9544-ENSMMUP00000020598"/>
<dbReference type="GeneID" id="714760"/>
<dbReference type="KEGG" id="mcc:714760"/>
<dbReference type="CTD" id="5460"/>
<dbReference type="eggNOG" id="KOG3802">
    <property type="taxonomic scope" value="Eukaryota"/>
</dbReference>
<dbReference type="InParanoid" id="Q5TM49"/>
<dbReference type="OrthoDB" id="6358449at2759"/>
<dbReference type="Proteomes" id="UP000006718">
    <property type="component" value="Unassembled WGS sequence"/>
</dbReference>
<dbReference type="GO" id="GO:0005737">
    <property type="term" value="C:cytoplasm"/>
    <property type="evidence" value="ECO:0007669"/>
    <property type="project" value="UniProtKB-SubCell"/>
</dbReference>
<dbReference type="GO" id="GO:0005634">
    <property type="term" value="C:nucleus"/>
    <property type="evidence" value="ECO:0007669"/>
    <property type="project" value="UniProtKB-SubCell"/>
</dbReference>
<dbReference type="GO" id="GO:0000981">
    <property type="term" value="F:DNA-binding transcription factor activity, RNA polymerase II-specific"/>
    <property type="evidence" value="ECO:0000318"/>
    <property type="project" value="GO_Central"/>
</dbReference>
<dbReference type="GO" id="GO:0000978">
    <property type="term" value="F:RNA polymerase II cis-regulatory region sequence-specific DNA binding"/>
    <property type="evidence" value="ECO:0000318"/>
    <property type="project" value="GO_Central"/>
</dbReference>
<dbReference type="GO" id="GO:0006357">
    <property type="term" value="P:regulation of transcription by RNA polymerase II"/>
    <property type="evidence" value="ECO:0000318"/>
    <property type="project" value="GO_Central"/>
</dbReference>
<dbReference type="CDD" id="cd00086">
    <property type="entry name" value="homeodomain"/>
    <property type="match status" value="1"/>
</dbReference>
<dbReference type="FunFam" id="1.10.10.60:FF:000161">
    <property type="entry name" value="POU domain protein"/>
    <property type="match status" value="1"/>
</dbReference>
<dbReference type="FunFam" id="1.10.260.40:FF:000022">
    <property type="entry name" value="POU domain protein"/>
    <property type="match status" value="1"/>
</dbReference>
<dbReference type="Gene3D" id="1.10.10.60">
    <property type="entry name" value="Homeodomain-like"/>
    <property type="match status" value="1"/>
</dbReference>
<dbReference type="Gene3D" id="1.10.260.40">
    <property type="entry name" value="lambda repressor-like DNA-binding domains"/>
    <property type="match status" value="1"/>
</dbReference>
<dbReference type="InterPro" id="IPR001356">
    <property type="entry name" value="HD"/>
</dbReference>
<dbReference type="InterPro" id="IPR017970">
    <property type="entry name" value="Homeobox_CS"/>
</dbReference>
<dbReference type="InterPro" id="IPR009057">
    <property type="entry name" value="Homeodomain-like_sf"/>
</dbReference>
<dbReference type="InterPro" id="IPR010982">
    <property type="entry name" value="Lambda_DNA-bd_dom_sf"/>
</dbReference>
<dbReference type="InterPro" id="IPR013847">
    <property type="entry name" value="POU"/>
</dbReference>
<dbReference type="InterPro" id="IPR000327">
    <property type="entry name" value="POU_dom"/>
</dbReference>
<dbReference type="InterPro" id="IPR050255">
    <property type="entry name" value="POU_domain_TF"/>
</dbReference>
<dbReference type="PANTHER" id="PTHR11636">
    <property type="entry name" value="POU DOMAIN"/>
    <property type="match status" value="1"/>
</dbReference>
<dbReference type="PANTHER" id="PTHR11636:SF86">
    <property type="entry name" value="POU DOMAIN, CLASS 5, TRANSCRIPTION FACTOR 1-RELATED"/>
    <property type="match status" value="1"/>
</dbReference>
<dbReference type="Pfam" id="PF00046">
    <property type="entry name" value="Homeodomain"/>
    <property type="match status" value="1"/>
</dbReference>
<dbReference type="Pfam" id="PF00157">
    <property type="entry name" value="Pou"/>
    <property type="match status" value="1"/>
</dbReference>
<dbReference type="PRINTS" id="PR00028">
    <property type="entry name" value="POUDOMAIN"/>
</dbReference>
<dbReference type="SMART" id="SM00389">
    <property type="entry name" value="HOX"/>
    <property type="match status" value="1"/>
</dbReference>
<dbReference type="SMART" id="SM00352">
    <property type="entry name" value="POU"/>
    <property type="match status" value="1"/>
</dbReference>
<dbReference type="SUPFAM" id="SSF46689">
    <property type="entry name" value="Homeodomain-like"/>
    <property type="match status" value="1"/>
</dbReference>
<dbReference type="SUPFAM" id="SSF47413">
    <property type="entry name" value="lambda repressor-like DNA-binding domains"/>
    <property type="match status" value="1"/>
</dbReference>
<dbReference type="PROSITE" id="PS00027">
    <property type="entry name" value="HOMEOBOX_1"/>
    <property type="match status" value="1"/>
</dbReference>
<dbReference type="PROSITE" id="PS50071">
    <property type="entry name" value="HOMEOBOX_2"/>
    <property type="match status" value="1"/>
</dbReference>
<dbReference type="PROSITE" id="PS00035">
    <property type="entry name" value="POU_1"/>
    <property type="match status" value="1"/>
</dbReference>
<dbReference type="PROSITE" id="PS00465">
    <property type="entry name" value="POU_2"/>
    <property type="match status" value="1"/>
</dbReference>
<dbReference type="PROSITE" id="PS51179">
    <property type="entry name" value="POU_3"/>
    <property type="match status" value="1"/>
</dbReference>
<gene>
    <name type="primary">POU5F1</name>
    <name type="synonym">OCT3</name>
    <name type="synonym">OCT4</name>
</gene>
<evidence type="ECO:0000250" key="1">
    <source>
        <dbReference type="UniProtKB" id="P20263"/>
    </source>
</evidence>
<evidence type="ECO:0000250" key="2">
    <source>
        <dbReference type="UniProtKB" id="Q01860"/>
    </source>
</evidence>
<evidence type="ECO:0000255" key="3">
    <source>
        <dbReference type="PROSITE-ProRule" id="PRU00108"/>
    </source>
</evidence>
<evidence type="ECO:0000255" key="4">
    <source>
        <dbReference type="PROSITE-ProRule" id="PRU00530"/>
    </source>
</evidence>
<evidence type="ECO:0000256" key="5">
    <source>
        <dbReference type="SAM" id="MobiDB-lite"/>
    </source>
</evidence>
<evidence type="ECO:0000269" key="6">
    <source>
    </source>
</evidence>
<evidence type="ECO:0000305" key="7"/>
<sequence length="360" mass="38530">MAGHLASDFAFSPPPGGGGDGPGGPETGWVDPRTWLSFQGPPGGPGIGPGVGPGSEVWGIPPCPPPYEFCGGMAYCGPQVGVGLVPQGGLETSQPEGEAGAGVESNSDGASPEPCTVPTGAVKLEKEKLEQNPEESQDIKALQKELEQFAKLLKQKRITLGYTQADVGLTLGVLFGKVFSQTTICRFEALQLSFKNMCKLRPLLQKWVEEADNNENLQEICKAETLVQARKRKRTSIENRVRGSLENLFLQCPKPTLQQISHIAQQLGLEKDVVRVWFCNRRQKGKRSSSDYAQREDFEAAGSPFSGGPVSFPLAPGPHFGTPGYGSPHFTALYSSVPFPEGEAFPPVPVTTLGSPMHSN</sequence>
<feature type="chain" id="PRO_0000100748" description="POU domain, class 5, transcription factor 1">
    <location>
        <begin position="1"/>
        <end position="360"/>
    </location>
</feature>
<feature type="domain" description="POU-specific" evidence="4">
    <location>
        <begin position="138"/>
        <end position="212"/>
    </location>
</feature>
<feature type="DNA-binding region" description="Homeobox" evidence="3">
    <location>
        <begin position="230"/>
        <end position="289"/>
    </location>
</feature>
<feature type="region of interest" description="Disordered" evidence="5">
    <location>
        <begin position="1"/>
        <end position="53"/>
    </location>
</feature>
<feature type="region of interest" description="Disordered" evidence="5">
    <location>
        <begin position="87"/>
        <end position="117"/>
    </location>
</feature>
<feature type="region of interest" description="DNA-binding" evidence="1">
    <location>
        <begin position="180"/>
        <end position="186"/>
    </location>
</feature>
<feature type="region of interest" description="DNA-binding" evidence="1">
    <location>
        <begin position="193"/>
        <end position="196"/>
    </location>
</feature>
<feature type="short sequence motif" description="9aaTAD" evidence="2">
    <location>
        <begin position="4"/>
        <end position="12"/>
    </location>
</feature>
<feature type="compositionally biased region" description="Gly residues" evidence="5">
    <location>
        <begin position="17"/>
        <end position="26"/>
    </location>
</feature>
<feature type="binding site" evidence="1">
    <location>
        <position position="157"/>
    </location>
    <ligand>
        <name>DNA</name>
        <dbReference type="ChEBI" id="CHEBI:16991"/>
    </ligand>
</feature>
<feature type="binding site" evidence="1">
    <location>
        <position position="164"/>
    </location>
    <ligand>
        <name>DNA</name>
        <dbReference type="ChEBI" id="CHEBI:16991"/>
    </ligand>
</feature>
<feature type="modified residue" description="Phosphoserine; by MAPK" evidence="2">
    <location>
        <position position="111"/>
    </location>
</feature>
<feature type="modified residue" description="Phosphothreonine" evidence="2">
    <location>
        <position position="235"/>
    </location>
</feature>
<feature type="modified residue" description="Phosphoserine" evidence="2">
    <location>
        <position position="236"/>
    </location>
</feature>
<feature type="modified residue" description="Phosphoserine" evidence="2">
    <location>
        <position position="289"/>
    </location>
</feature>
<feature type="modified residue" description="Phosphoserine" evidence="2">
    <location>
        <position position="290"/>
    </location>
</feature>
<feature type="modified residue" description="Phosphoserine" evidence="1">
    <location>
        <position position="355"/>
    </location>
</feature>
<feature type="cross-link" description="Glycyl lysine isopeptide (Lys-Gly) (interchain with G-Cter in SUMO)" evidence="1">
    <location>
        <position position="123"/>
    </location>
</feature>
<protein>
    <recommendedName>
        <fullName>POU domain, class 5, transcription factor 1</fullName>
    </recommendedName>
    <alternativeName>
        <fullName>Octamer-binding protein 3</fullName>
        <shortName>Oct-3</shortName>
    </alternativeName>
    <alternativeName>
        <fullName>Octamer-binding protein 4</fullName>
        <shortName>Oct-4</shortName>
    </alternativeName>
    <alternativeName>
        <fullName>Octamer-binding transcription factor 3</fullName>
        <shortName>OTF-3</shortName>
    </alternativeName>
</protein>
<accession>Q5TM49</accession>
<name>PO5F1_MACMU</name>
<keyword id="KW-0963">Cytoplasm</keyword>
<keyword id="KW-0217">Developmental protein</keyword>
<keyword id="KW-0238">DNA-binding</keyword>
<keyword id="KW-0371">Homeobox</keyword>
<keyword id="KW-1017">Isopeptide bond</keyword>
<keyword id="KW-0539">Nucleus</keyword>
<keyword id="KW-0597">Phosphoprotein</keyword>
<keyword id="KW-1185">Reference proteome</keyword>
<keyword id="KW-0804">Transcription</keyword>
<keyword id="KW-0805">Transcription regulation</keyword>
<keyword id="KW-0832">Ubl conjugation</keyword>
<organism>
    <name type="scientific">Macaca mulatta</name>
    <name type="common">Rhesus macaque</name>
    <dbReference type="NCBI Taxonomy" id="9544"/>
    <lineage>
        <taxon>Eukaryota</taxon>
        <taxon>Metazoa</taxon>
        <taxon>Chordata</taxon>
        <taxon>Craniata</taxon>
        <taxon>Vertebrata</taxon>
        <taxon>Euteleostomi</taxon>
        <taxon>Mammalia</taxon>
        <taxon>Eutheria</taxon>
        <taxon>Euarchontoglires</taxon>
        <taxon>Primates</taxon>
        <taxon>Haplorrhini</taxon>
        <taxon>Catarrhini</taxon>
        <taxon>Cercopithecidae</taxon>
        <taxon>Cercopithecinae</taxon>
        <taxon>Macaca</taxon>
    </lineage>
</organism>
<comment type="function">
    <text evidence="2 6">Transcription factor that binds to the octamer motif (5'-ATTTGCAT-3'). Forms a trimeric complex with SOX2 or SOX15 on DNA and controls the expression of a number of genes involved in embryonic development such as YES1, FGF4, UTF1 and ZFP206 (By similarity). Critical for early embryogenesis and for embryonic stem cell pluripotency.</text>
</comment>
<comment type="subunit">
    <text evidence="1 2">Interacts with PKM. Interacts with WWP2. Interacts with UBE2I and ZSCAN10. Interacts with PCGF1. Interacts with ESRRB; recruits ESRRB near the POU5F1-SOX2 element in the NANOG proximal promoter; the interaction is DNA independent. Interacts with ZNF322. Interacts with MAPK8 and MAPK9; the interaction allows MAPK8 and MAPK9 to phosphorylate POU5F1 on Ser-355. Interacts (when phosphorylated on Ser-355) with FBXW8. Interacts with FBXW4. Interacts with SOX2 and SOX15; binds synergistically with either SOX2 or SOX15 to DNA (By similarity). Interacts with DDX56 (By similarity).</text>
</comment>
<comment type="subcellular location">
    <subcellularLocation>
        <location>Cytoplasm</location>
    </subcellularLocation>
    <subcellularLocation>
        <location>Nucleus</location>
    </subcellularLocation>
    <text evidence="1 2">Expressed in a diffuse and slightly punctuate pattern. Colocalizes with MAPK8 and MAPK9 in the nucleus.</text>
</comment>
<comment type="domain">
    <text evidence="2">The POU-specific domain mediates interaction with PKM.</text>
</comment>
<comment type="domain">
    <text evidence="2">The 9aaTAD motif is a transactivation domain present in a large number of yeast and animal transcription factors.</text>
</comment>
<comment type="PTM">
    <text evidence="1">Sumoylation enhances the protein stability, DNA binding and transactivation activity. Sumoylation is required for enhanced YES1 expression.</text>
</comment>
<comment type="PTM">
    <text evidence="1">Ubiquitinated; undergoes 'Lys-63'-linked polyubiquitination by WWP2 leading to proteasomal degradation.</text>
</comment>
<comment type="PTM">
    <text evidence="2">ERK1/2-mediated phosphorylation at Ser-111 promotes nuclear exclusion and proteasomal degradation. Phosphorylation at Thr-235 and Ser-236 decrease DNA-binding and alters ability to activate transcription.</text>
</comment>
<comment type="biotechnology">
    <text evidence="6">POU5F1/OCT4, SOX2, MYC/c-Myc and KLF4 are the four Yamanaka factors. When combined, these factors are sufficient to reprogram differentiated cells to an embryonic-like state designated iPS (induced pluripotent stem) cells. iPS cells exhibit the morphology and growth properties of ES cells and express ES cell marker genes.</text>
</comment>
<comment type="similarity">
    <text evidence="7">Belongs to the POU transcription factor family. Class-5 subfamily.</text>
</comment>